<name>TGT_HERA2</name>
<feature type="chain" id="PRO_1000203656" description="Queuine tRNA-ribosyltransferase">
    <location>
        <begin position="1"/>
        <end position="392"/>
    </location>
</feature>
<feature type="region of interest" description="RNA binding" evidence="1">
    <location>
        <begin position="246"/>
        <end position="252"/>
    </location>
</feature>
<feature type="region of interest" description="RNA binding; important for wobble base 34 recognition" evidence="1">
    <location>
        <begin position="270"/>
        <end position="274"/>
    </location>
</feature>
<feature type="active site" description="Proton acceptor" evidence="1">
    <location>
        <position position="92"/>
    </location>
</feature>
<feature type="active site" description="Nucleophile" evidence="1">
    <location>
        <position position="265"/>
    </location>
</feature>
<feature type="binding site" evidence="1">
    <location>
        <begin position="92"/>
        <end position="96"/>
    </location>
    <ligand>
        <name>substrate</name>
    </ligand>
</feature>
<feature type="binding site" evidence="1">
    <location>
        <position position="146"/>
    </location>
    <ligand>
        <name>substrate</name>
    </ligand>
</feature>
<feature type="binding site" evidence="1">
    <location>
        <position position="188"/>
    </location>
    <ligand>
        <name>substrate</name>
    </ligand>
</feature>
<feature type="binding site" evidence="1">
    <location>
        <position position="215"/>
    </location>
    <ligand>
        <name>substrate</name>
    </ligand>
</feature>
<feature type="binding site" evidence="1">
    <location>
        <position position="303"/>
    </location>
    <ligand>
        <name>Zn(2+)</name>
        <dbReference type="ChEBI" id="CHEBI:29105"/>
    </ligand>
</feature>
<feature type="binding site" evidence="1">
    <location>
        <position position="305"/>
    </location>
    <ligand>
        <name>Zn(2+)</name>
        <dbReference type="ChEBI" id="CHEBI:29105"/>
    </ligand>
</feature>
<feature type="binding site" evidence="1">
    <location>
        <position position="308"/>
    </location>
    <ligand>
        <name>Zn(2+)</name>
        <dbReference type="ChEBI" id="CHEBI:29105"/>
    </ligand>
</feature>
<feature type="binding site" evidence="1">
    <location>
        <position position="334"/>
    </location>
    <ligand>
        <name>Zn(2+)</name>
        <dbReference type="ChEBI" id="CHEBI:29105"/>
    </ligand>
</feature>
<keyword id="KW-0328">Glycosyltransferase</keyword>
<keyword id="KW-0479">Metal-binding</keyword>
<keyword id="KW-0671">Queuosine biosynthesis</keyword>
<keyword id="KW-0808">Transferase</keyword>
<keyword id="KW-0819">tRNA processing</keyword>
<keyword id="KW-0862">Zinc</keyword>
<dbReference type="EC" id="2.4.2.29" evidence="1"/>
<dbReference type="EMBL" id="CP000875">
    <property type="protein sequence ID" value="ABX03280.1"/>
    <property type="molecule type" value="Genomic_DNA"/>
</dbReference>
<dbReference type="SMR" id="A9AW42"/>
<dbReference type="FunCoup" id="A9AW42">
    <property type="interactions" value="528"/>
</dbReference>
<dbReference type="STRING" id="316274.Haur_0632"/>
<dbReference type="KEGG" id="hau:Haur_0632"/>
<dbReference type="eggNOG" id="COG0343">
    <property type="taxonomic scope" value="Bacteria"/>
</dbReference>
<dbReference type="HOGENOM" id="CLU_022060_0_1_0"/>
<dbReference type="InParanoid" id="A9AW42"/>
<dbReference type="UniPathway" id="UPA00392"/>
<dbReference type="Proteomes" id="UP000000787">
    <property type="component" value="Chromosome"/>
</dbReference>
<dbReference type="GO" id="GO:0005829">
    <property type="term" value="C:cytosol"/>
    <property type="evidence" value="ECO:0007669"/>
    <property type="project" value="TreeGrafter"/>
</dbReference>
<dbReference type="GO" id="GO:0046872">
    <property type="term" value="F:metal ion binding"/>
    <property type="evidence" value="ECO:0007669"/>
    <property type="project" value="UniProtKB-KW"/>
</dbReference>
<dbReference type="GO" id="GO:0008479">
    <property type="term" value="F:tRNA-guanosine(34) queuine transglycosylase activity"/>
    <property type="evidence" value="ECO:0007669"/>
    <property type="project" value="UniProtKB-UniRule"/>
</dbReference>
<dbReference type="GO" id="GO:0008616">
    <property type="term" value="P:queuosine biosynthetic process"/>
    <property type="evidence" value="ECO:0007669"/>
    <property type="project" value="UniProtKB-UniRule"/>
</dbReference>
<dbReference type="GO" id="GO:0002099">
    <property type="term" value="P:tRNA wobble guanine modification"/>
    <property type="evidence" value="ECO:0007669"/>
    <property type="project" value="TreeGrafter"/>
</dbReference>
<dbReference type="GO" id="GO:0101030">
    <property type="term" value="P:tRNA-guanine transglycosylation"/>
    <property type="evidence" value="ECO:0007669"/>
    <property type="project" value="InterPro"/>
</dbReference>
<dbReference type="FunFam" id="3.20.20.105:FF:000001">
    <property type="entry name" value="Queuine tRNA-ribosyltransferase"/>
    <property type="match status" value="1"/>
</dbReference>
<dbReference type="Gene3D" id="3.20.20.105">
    <property type="entry name" value="Queuine tRNA-ribosyltransferase-like"/>
    <property type="match status" value="1"/>
</dbReference>
<dbReference type="HAMAP" id="MF_00168">
    <property type="entry name" value="Q_tRNA_Tgt"/>
    <property type="match status" value="1"/>
</dbReference>
<dbReference type="InterPro" id="IPR050076">
    <property type="entry name" value="ArchSynthase1/Queuine_TRR"/>
</dbReference>
<dbReference type="InterPro" id="IPR004803">
    <property type="entry name" value="TGT"/>
</dbReference>
<dbReference type="InterPro" id="IPR036511">
    <property type="entry name" value="TGT-like_sf"/>
</dbReference>
<dbReference type="InterPro" id="IPR002616">
    <property type="entry name" value="tRNA_ribo_trans-like"/>
</dbReference>
<dbReference type="NCBIfam" id="TIGR00430">
    <property type="entry name" value="Q_tRNA_tgt"/>
    <property type="match status" value="1"/>
</dbReference>
<dbReference type="NCBIfam" id="TIGR00449">
    <property type="entry name" value="tgt_general"/>
    <property type="match status" value="1"/>
</dbReference>
<dbReference type="PANTHER" id="PTHR46499">
    <property type="entry name" value="QUEUINE TRNA-RIBOSYLTRANSFERASE"/>
    <property type="match status" value="1"/>
</dbReference>
<dbReference type="PANTHER" id="PTHR46499:SF1">
    <property type="entry name" value="QUEUINE TRNA-RIBOSYLTRANSFERASE"/>
    <property type="match status" value="1"/>
</dbReference>
<dbReference type="Pfam" id="PF01702">
    <property type="entry name" value="TGT"/>
    <property type="match status" value="1"/>
</dbReference>
<dbReference type="SUPFAM" id="SSF51713">
    <property type="entry name" value="tRNA-guanine transglycosylase"/>
    <property type="match status" value="1"/>
</dbReference>
<evidence type="ECO:0000255" key="1">
    <source>
        <dbReference type="HAMAP-Rule" id="MF_00168"/>
    </source>
</evidence>
<gene>
    <name evidence="1" type="primary">tgt</name>
    <name type="ordered locus">Haur_0632</name>
</gene>
<proteinExistence type="inferred from homology"/>
<comment type="function">
    <text evidence="1">Catalyzes the base-exchange of a guanine (G) residue with the queuine precursor 7-aminomethyl-7-deazaguanine (PreQ1) at position 34 (anticodon wobble position) in tRNAs with GU(N) anticodons (tRNA-Asp, -Asn, -His and -Tyr). Catalysis occurs through a double-displacement mechanism. The nucleophile active site attacks the C1' of nucleotide 34 to detach the guanine base from the RNA, forming a covalent enzyme-RNA intermediate. The proton acceptor active site deprotonates the incoming PreQ1, allowing a nucleophilic attack on the C1' of the ribose to form the product. After dissociation, two additional enzymatic reactions on the tRNA convert PreQ1 to queuine (Q), resulting in the hypermodified nucleoside queuosine (7-(((4,5-cis-dihydroxy-2-cyclopenten-1-yl)amino)methyl)-7-deazaguanosine).</text>
</comment>
<comment type="catalytic activity">
    <reaction evidence="1">
        <text>7-aminomethyl-7-carbaguanine + guanosine(34) in tRNA = 7-aminomethyl-7-carbaguanosine(34) in tRNA + guanine</text>
        <dbReference type="Rhea" id="RHEA:24104"/>
        <dbReference type="Rhea" id="RHEA-COMP:10341"/>
        <dbReference type="Rhea" id="RHEA-COMP:10342"/>
        <dbReference type="ChEBI" id="CHEBI:16235"/>
        <dbReference type="ChEBI" id="CHEBI:58703"/>
        <dbReference type="ChEBI" id="CHEBI:74269"/>
        <dbReference type="ChEBI" id="CHEBI:82833"/>
        <dbReference type="EC" id="2.4.2.29"/>
    </reaction>
</comment>
<comment type="cofactor">
    <cofactor evidence="1">
        <name>Zn(2+)</name>
        <dbReference type="ChEBI" id="CHEBI:29105"/>
    </cofactor>
    <text evidence="1">Binds 1 zinc ion per subunit.</text>
</comment>
<comment type="pathway">
    <text evidence="1">tRNA modification; tRNA-queuosine biosynthesis.</text>
</comment>
<comment type="subunit">
    <text evidence="1">Homodimer. Within each dimer, one monomer is responsible for RNA recognition and catalysis, while the other monomer binds to the replacement base PreQ1.</text>
</comment>
<comment type="similarity">
    <text evidence="1">Belongs to the queuine tRNA-ribosyltransferase family.</text>
</comment>
<reference key="1">
    <citation type="journal article" date="2011" name="Stand. Genomic Sci.">
        <title>Complete genome sequence of the filamentous gliding predatory bacterium Herpetosiphon aurantiacus type strain (114-95(T)).</title>
        <authorList>
            <person name="Kiss H."/>
            <person name="Nett M."/>
            <person name="Domin N."/>
            <person name="Martin K."/>
            <person name="Maresca J.A."/>
            <person name="Copeland A."/>
            <person name="Lapidus A."/>
            <person name="Lucas S."/>
            <person name="Berry K.W."/>
            <person name="Glavina Del Rio T."/>
            <person name="Dalin E."/>
            <person name="Tice H."/>
            <person name="Pitluck S."/>
            <person name="Richardson P."/>
            <person name="Bruce D."/>
            <person name="Goodwin L."/>
            <person name="Han C."/>
            <person name="Detter J.C."/>
            <person name="Schmutz J."/>
            <person name="Brettin T."/>
            <person name="Land M."/>
            <person name="Hauser L."/>
            <person name="Kyrpides N.C."/>
            <person name="Ivanova N."/>
            <person name="Goeker M."/>
            <person name="Woyke T."/>
            <person name="Klenk H.P."/>
            <person name="Bryant D.A."/>
        </authorList>
    </citation>
    <scope>NUCLEOTIDE SEQUENCE [LARGE SCALE GENOMIC DNA]</scope>
    <source>
        <strain>ATCC 23779 / DSM 785 / 114-95</strain>
    </source>
</reference>
<organism>
    <name type="scientific">Herpetosiphon aurantiacus (strain ATCC 23779 / DSM 785 / 114-95)</name>
    <dbReference type="NCBI Taxonomy" id="316274"/>
    <lineage>
        <taxon>Bacteria</taxon>
        <taxon>Bacillati</taxon>
        <taxon>Chloroflexota</taxon>
        <taxon>Chloroflexia</taxon>
        <taxon>Herpetosiphonales</taxon>
        <taxon>Herpetosiphonaceae</taxon>
        <taxon>Herpetosiphon</taxon>
    </lineage>
</organism>
<accession>A9AW42</accession>
<sequence>MNNFTYTLEHSDGEARAGQFSTPHGTIQTPVFMPVGTQATVKTLDPLEVEAIGSQIILSNTYHLYLRPSADLVAEMGGLHRFMQWPKPILTDSGGFQVFSLGPHSKIDEDGVTFKSHIDGSKHRFTPESAIGIQEKLGADIIMAFDECAPQPTTHAYTKAAMERTHRWLLRCIAAKTRADQALFGIVQGGVEADLRRESASFIAQQDVPGIGIGGLSVGEPKEQMYGMLEETTPLLPRNKPRYLMGVGSPEDLLEGVARGVDMFDCVLPTRLGRNGALFIPEGRLNIGNAKYAREDAPIDATCDCSTCQRFSRAYLRHLFRTEEVLGLRLATLHNLRFLIRLMEQAREAILQDRYQSFMDDWLSRFQTIPHAVREASRAARLNSLRTQGDKA</sequence>
<protein>
    <recommendedName>
        <fullName evidence="1">Queuine tRNA-ribosyltransferase</fullName>
        <ecNumber evidence="1">2.4.2.29</ecNumber>
    </recommendedName>
    <alternativeName>
        <fullName evidence="1">Guanine insertion enzyme</fullName>
    </alternativeName>
    <alternativeName>
        <fullName evidence="1">tRNA-guanine transglycosylase</fullName>
    </alternativeName>
</protein>